<comment type="catalytic activity">
    <reaction evidence="1">
        <text>alpha-D-xylose = alpha-D-xylulofuranose</text>
        <dbReference type="Rhea" id="RHEA:22816"/>
        <dbReference type="ChEBI" id="CHEBI:28518"/>
        <dbReference type="ChEBI" id="CHEBI:188998"/>
        <dbReference type="EC" id="5.3.1.5"/>
    </reaction>
</comment>
<comment type="cofactor">
    <cofactor evidence="1">
        <name>Mg(2+)</name>
        <dbReference type="ChEBI" id="CHEBI:18420"/>
    </cofactor>
    <text evidence="1">Binds 2 magnesium ions per subunit.</text>
</comment>
<comment type="subunit">
    <text evidence="1">Homotetramer.</text>
</comment>
<comment type="subcellular location">
    <subcellularLocation>
        <location evidence="1">Cytoplasm</location>
    </subcellularLocation>
</comment>
<comment type="similarity">
    <text evidence="1">Belongs to the xylose isomerase family.</text>
</comment>
<evidence type="ECO:0000255" key="1">
    <source>
        <dbReference type="HAMAP-Rule" id="MF_00455"/>
    </source>
</evidence>
<proteinExistence type="inferred from homology"/>
<accession>Q03HN1</accession>
<reference key="1">
    <citation type="journal article" date="2006" name="Proc. Natl. Acad. Sci. U.S.A.">
        <title>Comparative genomics of the lactic acid bacteria.</title>
        <authorList>
            <person name="Makarova K.S."/>
            <person name="Slesarev A."/>
            <person name="Wolf Y.I."/>
            <person name="Sorokin A."/>
            <person name="Mirkin B."/>
            <person name="Koonin E.V."/>
            <person name="Pavlov A."/>
            <person name="Pavlova N."/>
            <person name="Karamychev V."/>
            <person name="Polouchine N."/>
            <person name="Shakhova V."/>
            <person name="Grigoriev I."/>
            <person name="Lou Y."/>
            <person name="Rohksar D."/>
            <person name="Lucas S."/>
            <person name="Huang K."/>
            <person name="Goodstein D.M."/>
            <person name="Hawkins T."/>
            <person name="Plengvidhya V."/>
            <person name="Welker D."/>
            <person name="Hughes J."/>
            <person name="Goh Y."/>
            <person name="Benson A."/>
            <person name="Baldwin K."/>
            <person name="Lee J.-H."/>
            <person name="Diaz-Muniz I."/>
            <person name="Dosti B."/>
            <person name="Smeianov V."/>
            <person name="Wechter W."/>
            <person name="Barabote R."/>
            <person name="Lorca G."/>
            <person name="Altermann E."/>
            <person name="Barrangou R."/>
            <person name="Ganesan B."/>
            <person name="Xie Y."/>
            <person name="Rawsthorne H."/>
            <person name="Tamir D."/>
            <person name="Parker C."/>
            <person name="Breidt F."/>
            <person name="Broadbent J.R."/>
            <person name="Hutkins R."/>
            <person name="O'Sullivan D."/>
            <person name="Steele J."/>
            <person name="Unlu G."/>
            <person name="Saier M.H. Jr."/>
            <person name="Klaenhammer T."/>
            <person name="Richardson P."/>
            <person name="Kozyavkin S."/>
            <person name="Weimer B.C."/>
            <person name="Mills D.A."/>
        </authorList>
    </citation>
    <scope>NUCLEOTIDE SEQUENCE [LARGE SCALE GENOMIC DNA]</scope>
    <source>
        <strain>ATCC 25745 / CCUG 21536 / LMG 10740 / 183-1w</strain>
    </source>
</reference>
<gene>
    <name evidence="1" type="primary">xylA</name>
    <name type="ordered locus">PEPE_0187</name>
</gene>
<dbReference type="EC" id="5.3.1.5" evidence="1"/>
<dbReference type="EMBL" id="CP000422">
    <property type="protein sequence ID" value="ABJ67291.1"/>
    <property type="molecule type" value="Genomic_DNA"/>
</dbReference>
<dbReference type="RefSeq" id="WP_002834438.1">
    <property type="nucleotide sequence ID" value="NC_008525.1"/>
</dbReference>
<dbReference type="SMR" id="Q03HN1"/>
<dbReference type="STRING" id="278197.PEPE_0187"/>
<dbReference type="GeneID" id="33062980"/>
<dbReference type="KEGG" id="ppe:PEPE_0187"/>
<dbReference type="eggNOG" id="COG2115">
    <property type="taxonomic scope" value="Bacteria"/>
</dbReference>
<dbReference type="HOGENOM" id="CLU_037261_1_0_9"/>
<dbReference type="OrthoDB" id="9763981at2"/>
<dbReference type="Proteomes" id="UP000000773">
    <property type="component" value="Chromosome"/>
</dbReference>
<dbReference type="GO" id="GO:0005737">
    <property type="term" value="C:cytoplasm"/>
    <property type="evidence" value="ECO:0007669"/>
    <property type="project" value="UniProtKB-SubCell"/>
</dbReference>
<dbReference type="GO" id="GO:0000287">
    <property type="term" value="F:magnesium ion binding"/>
    <property type="evidence" value="ECO:0007669"/>
    <property type="project" value="UniProtKB-UniRule"/>
</dbReference>
<dbReference type="GO" id="GO:0009045">
    <property type="term" value="F:xylose isomerase activity"/>
    <property type="evidence" value="ECO:0007669"/>
    <property type="project" value="UniProtKB-UniRule"/>
</dbReference>
<dbReference type="GO" id="GO:0042732">
    <property type="term" value="P:D-xylose metabolic process"/>
    <property type="evidence" value="ECO:0007669"/>
    <property type="project" value="UniProtKB-UniRule"/>
</dbReference>
<dbReference type="Gene3D" id="3.20.20.150">
    <property type="entry name" value="Divalent-metal-dependent TIM barrel enzymes"/>
    <property type="match status" value="1"/>
</dbReference>
<dbReference type="HAMAP" id="MF_00455">
    <property type="entry name" value="Xylose_isom_A"/>
    <property type="match status" value="1"/>
</dbReference>
<dbReference type="InterPro" id="IPR036237">
    <property type="entry name" value="Xyl_isomerase-like_sf"/>
</dbReference>
<dbReference type="InterPro" id="IPR013452">
    <property type="entry name" value="Xylose_isom_bac"/>
</dbReference>
<dbReference type="InterPro" id="IPR001998">
    <property type="entry name" value="Xylose_isomerase"/>
</dbReference>
<dbReference type="NCBIfam" id="NF003998">
    <property type="entry name" value="PRK05474.1"/>
    <property type="match status" value="1"/>
</dbReference>
<dbReference type="NCBIfam" id="TIGR02630">
    <property type="entry name" value="xylose_isom_A"/>
    <property type="match status" value="1"/>
</dbReference>
<dbReference type="PANTHER" id="PTHR48408">
    <property type="match status" value="1"/>
</dbReference>
<dbReference type="PANTHER" id="PTHR48408:SF1">
    <property type="entry name" value="XYLOSE ISOMERASE"/>
    <property type="match status" value="1"/>
</dbReference>
<dbReference type="PRINTS" id="PR00688">
    <property type="entry name" value="XYLOSISMRASE"/>
</dbReference>
<dbReference type="SUPFAM" id="SSF51658">
    <property type="entry name" value="Xylose isomerase-like"/>
    <property type="match status" value="1"/>
</dbReference>
<dbReference type="PROSITE" id="PS51415">
    <property type="entry name" value="XYLOSE_ISOMERASE"/>
    <property type="match status" value="1"/>
</dbReference>
<organism>
    <name type="scientific">Pediococcus pentosaceus (strain ATCC 25745 / CCUG 21536 / LMG 10740 / 183-1w)</name>
    <dbReference type="NCBI Taxonomy" id="278197"/>
    <lineage>
        <taxon>Bacteria</taxon>
        <taxon>Bacillati</taxon>
        <taxon>Bacillota</taxon>
        <taxon>Bacilli</taxon>
        <taxon>Lactobacillales</taxon>
        <taxon>Lactobacillaceae</taxon>
        <taxon>Pediococcus</taxon>
    </lineage>
</organism>
<feature type="chain" id="PRO_1000026448" description="Xylose isomerase">
    <location>
        <begin position="1"/>
        <end position="447"/>
    </location>
</feature>
<feature type="active site" evidence="1">
    <location>
        <position position="102"/>
    </location>
</feature>
<feature type="active site" evidence="1">
    <location>
        <position position="105"/>
    </location>
</feature>
<feature type="binding site" evidence="1">
    <location>
        <position position="233"/>
    </location>
    <ligand>
        <name>Mg(2+)</name>
        <dbReference type="ChEBI" id="CHEBI:18420"/>
        <label>1</label>
    </ligand>
</feature>
<feature type="binding site" evidence="1">
    <location>
        <position position="269"/>
    </location>
    <ligand>
        <name>Mg(2+)</name>
        <dbReference type="ChEBI" id="CHEBI:18420"/>
        <label>1</label>
    </ligand>
</feature>
<feature type="binding site" evidence="1">
    <location>
        <position position="269"/>
    </location>
    <ligand>
        <name>Mg(2+)</name>
        <dbReference type="ChEBI" id="CHEBI:18420"/>
        <label>2</label>
    </ligand>
</feature>
<feature type="binding site" evidence="1">
    <location>
        <position position="272"/>
    </location>
    <ligand>
        <name>Mg(2+)</name>
        <dbReference type="ChEBI" id="CHEBI:18420"/>
        <label>2</label>
    </ligand>
</feature>
<feature type="binding site" evidence="1">
    <location>
        <position position="297"/>
    </location>
    <ligand>
        <name>Mg(2+)</name>
        <dbReference type="ChEBI" id="CHEBI:18420"/>
        <label>1</label>
    </ligand>
</feature>
<feature type="binding site" evidence="1">
    <location>
        <position position="308"/>
    </location>
    <ligand>
        <name>Mg(2+)</name>
        <dbReference type="ChEBI" id="CHEBI:18420"/>
        <label>2</label>
    </ligand>
</feature>
<feature type="binding site" evidence="1">
    <location>
        <position position="310"/>
    </location>
    <ligand>
        <name>Mg(2+)</name>
        <dbReference type="ChEBI" id="CHEBI:18420"/>
        <label>2</label>
    </ligand>
</feature>
<feature type="binding site" evidence="1">
    <location>
        <position position="340"/>
    </location>
    <ligand>
        <name>Mg(2+)</name>
        <dbReference type="ChEBI" id="CHEBI:18420"/>
        <label>1</label>
    </ligand>
</feature>
<keyword id="KW-0119">Carbohydrate metabolism</keyword>
<keyword id="KW-0963">Cytoplasm</keyword>
<keyword id="KW-0413">Isomerase</keyword>
<keyword id="KW-0460">Magnesium</keyword>
<keyword id="KW-0479">Metal-binding</keyword>
<keyword id="KW-0859">Xylose metabolism</keyword>
<sequence length="447" mass="50862">MSEYYDFNKMEYIGNQKGLKAGDGFHYYNPDELIQGKKMSEWLKFSVAYWHTMDQRLVDPFGDGTAQRPWDKFEDPMEQALAKVDYMFEFLDKMNVEYFAFHDRDLAPEGNTLRETNANLDKVVDKIVEKMQETGKKVLWNTSSLFTNPRFVAGGATAPFADIVAYSAAQIKHSLEIAKRVNSMNYVFWGGREGYESLLNTDMKLEQEHIAKFFHMAKDYANEIGYTGQFLLEPKPKEPTSHQYDTDAATTIAFLKTYGLEKDFKLNLEGNHAYLAGHTYEHEVRVARDAGLLGSLDANMGDKLIGWDIDEFPNDIYEATLVMYEMLKNGGLATGGLNFDAKPRRQSFTMEDLFLAHTAGMDTYAAGLRVAAKLLEDRVFDSVIEDRYSSFKSGIGADFENDKVTFKELEDYVIDKPQSELIAATKSGHLEQLKSTLNNYIFTVLGK</sequence>
<protein>
    <recommendedName>
        <fullName evidence="1">Xylose isomerase</fullName>
        <ecNumber evidence="1">5.3.1.5</ecNumber>
    </recommendedName>
</protein>
<name>XYLA_PEDPA</name>